<reference key="1">
    <citation type="journal article" date="2003" name="Nucleic Acids Res.">
        <title>The complete genome sequence and analysis of Corynebacterium diphtheriae NCTC13129.</title>
        <authorList>
            <person name="Cerdeno-Tarraga A.-M."/>
            <person name="Efstratiou A."/>
            <person name="Dover L.G."/>
            <person name="Holden M.T.G."/>
            <person name="Pallen M.J."/>
            <person name="Bentley S.D."/>
            <person name="Besra G.S."/>
            <person name="Churcher C.M."/>
            <person name="James K.D."/>
            <person name="De Zoysa A."/>
            <person name="Chillingworth T."/>
            <person name="Cronin A."/>
            <person name="Dowd L."/>
            <person name="Feltwell T."/>
            <person name="Hamlin N."/>
            <person name="Holroyd S."/>
            <person name="Jagels K."/>
            <person name="Moule S."/>
            <person name="Quail M.A."/>
            <person name="Rabbinowitsch E."/>
            <person name="Rutherford K.M."/>
            <person name="Thomson N.R."/>
            <person name="Unwin L."/>
            <person name="Whitehead S."/>
            <person name="Barrell B.G."/>
            <person name="Parkhill J."/>
        </authorList>
    </citation>
    <scope>NUCLEOTIDE SEQUENCE [LARGE SCALE GENOMIC DNA]</scope>
    <source>
        <strain>ATCC 700971 / NCTC 13129 / Biotype gravis</strain>
    </source>
</reference>
<name>SYC_CORDI</name>
<evidence type="ECO:0000255" key="1">
    <source>
        <dbReference type="HAMAP-Rule" id="MF_00041"/>
    </source>
</evidence>
<keyword id="KW-0030">Aminoacyl-tRNA synthetase</keyword>
<keyword id="KW-0067">ATP-binding</keyword>
<keyword id="KW-0963">Cytoplasm</keyword>
<keyword id="KW-0436">Ligase</keyword>
<keyword id="KW-0479">Metal-binding</keyword>
<keyword id="KW-0547">Nucleotide-binding</keyword>
<keyword id="KW-0648">Protein biosynthesis</keyword>
<keyword id="KW-1185">Reference proteome</keyword>
<keyword id="KW-0862">Zinc</keyword>
<accession>Q6NFC3</accession>
<feature type="chain" id="PRO_0000159384" description="Cysteine--tRNA ligase">
    <location>
        <begin position="1"/>
        <end position="463"/>
    </location>
</feature>
<feature type="short sequence motif" description="'HIGH' region">
    <location>
        <begin position="31"/>
        <end position="41"/>
    </location>
</feature>
<feature type="short sequence motif" description="'KMSKS' region">
    <location>
        <begin position="268"/>
        <end position="272"/>
    </location>
</feature>
<feature type="binding site" evidence="1">
    <location>
        <position position="29"/>
    </location>
    <ligand>
        <name>Zn(2+)</name>
        <dbReference type="ChEBI" id="CHEBI:29105"/>
    </ligand>
</feature>
<feature type="binding site" evidence="1">
    <location>
        <position position="212"/>
    </location>
    <ligand>
        <name>Zn(2+)</name>
        <dbReference type="ChEBI" id="CHEBI:29105"/>
    </ligand>
</feature>
<feature type="binding site" evidence="1">
    <location>
        <position position="237"/>
    </location>
    <ligand>
        <name>Zn(2+)</name>
        <dbReference type="ChEBI" id="CHEBI:29105"/>
    </ligand>
</feature>
<feature type="binding site" evidence="1">
    <location>
        <position position="241"/>
    </location>
    <ligand>
        <name>Zn(2+)</name>
        <dbReference type="ChEBI" id="CHEBI:29105"/>
    </ligand>
</feature>
<feature type="binding site" evidence="1">
    <location>
        <position position="271"/>
    </location>
    <ligand>
        <name>ATP</name>
        <dbReference type="ChEBI" id="CHEBI:30616"/>
    </ligand>
</feature>
<gene>
    <name evidence="1" type="primary">cysS</name>
    <name type="synonym">cysS1</name>
    <name type="ordered locus">DIP1971</name>
</gene>
<protein>
    <recommendedName>
        <fullName evidence="1">Cysteine--tRNA ligase</fullName>
        <ecNumber evidence="1">6.1.1.16</ecNumber>
    </recommendedName>
    <alternativeName>
        <fullName evidence="1">Cysteinyl-tRNA synthetase</fullName>
        <shortName evidence="1">CysRS</shortName>
    </alternativeName>
</protein>
<comment type="catalytic activity">
    <reaction evidence="1">
        <text>tRNA(Cys) + L-cysteine + ATP = L-cysteinyl-tRNA(Cys) + AMP + diphosphate</text>
        <dbReference type="Rhea" id="RHEA:17773"/>
        <dbReference type="Rhea" id="RHEA-COMP:9661"/>
        <dbReference type="Rhea" id="RHEA-COMP:9679"/>
        <dbReference type="ChEBI" id="CHEBI:30616"/>
        <dbReference type="ChEBI" id="CHEBI:33019"/>
        <dbReference type="ChEBI" id="CHEBI:35235"/>
        <dbReference type="ChEBI" id="CHEBI:78442"/>
        <dbReference type="ChEBI" id="CHEBI:78517"/>
        <dbReference type="ChEBI" id="CHEBI:456215"/>
        <dbReference type="EC" id="6.1.1.16"/>
    </reaction>
</comment>
<comment type="cofactor">
    <cofactor evidence="1">
        <name>Zn(2+)</name>
        <dbReference type="ChEBI" id="CHEBI:29105"/>
    </cofactor>
    <text evidence="1">Binds 1 zinc ion per subunit.</text>
</comment>
<comment type="subunit">
    <text evidence="1">Monomer.</text>
</comment>
<comment type="subcellular location">
    <subcellularLocation>
        <location evidence="1">Cytoplasm</location>
    </subcellularLocation>
</comment>
<comment type="similarity">
    <text evidence="1">Belongs to the class-I aminoacyl-tRNA synthetase family.</text>
</comment>
<dbReference type="EC" id="6.1.1.16" evidence="1"/>
<dbReference type="EMBL" id="BX248359">
    <property type="protein sequence ID" value="CAE50502.1"/>
    <property type="molecule type" value="Genomic_DNA"/>
</dbReference>
<dbReference type="RefSeq" id="WP_010935473.1">
    <property type="nucleotide sequence ID" value="NC_002935.2"/>
</dbReference>
<dbReference type="SMR" id="Q6NFC3"/>
<dbReference type="STRING" id="257309.DIP1971"/>
<dbReference type="KEGG" id="cdi:DIP1971"/>
<dbReference type="HOGENOM" id="CLU_013528_0_1_11"/>
<dbReference type="Proteomes" id="UP000002198">
    <property type="component" value="Chromosome"/>
</dbReference>
<dbReference type="GO" id="GO:0005829">
    <property type="term" value="C:cytosol"/>
    <property type="evidence" value="ECO:0007669"/>
    <property type="project" value="TreeGrafter"/>
</dbReference>
<dbReference type="GO" id="GO:0005524">
    <property type="term" value="F:ATP binding"/>
    <property type="evidence" value="ECO:0007669"/>
    <property type="project" value="UniProtKB-UniRule"/>
</dbReference>
<dbReference type="GO" id="GO:0004817">
    <property type="term" value="F:cysteine-tRNA ligase activity"/>
    <property type="evidence" value="ECO:0007669"/>
    <property type="project" value="UniProtKB-UniRule"/>
</dbReference>
<dbReference type="GO" id="GO:0008270">
    <property type="term" value="F:zinc ion binding"/>
    <property type="evidence" value="ECO:0007669"/>
    <property type="project" value="UniProtKB-UniRule"/>
</dbReference>
<dbReference type="GO" id="GO:0006423">
    <property type="term" value="P:cysteinyl-tRNA aminoacylation"/>
    <property type="evidence" value="ECO:0007669"/>
    <property type="project" value="UniProtKB-UniRule"/>
</dbReference>
<dbReference type="CDD" id="cd00672">
    <property type="entry name" value="CysRS_core"/>
    <property type="match status" value="1"/>
</dbReference>
<dbReference type="FunFam" id="3.40.50.620:FF:000068">
    <property type="entry name" value="Cysteine--tRNA ligase"/>
    <property type="match status" value="1"/>
</dbReference>
<dbReference type="Gene3D" id="1.20.120.1910">
    <property type="entry name" value="Cysteine-tRNA ligase, C-terminal anti-codon recognition domain"/>
    <property type="match status" value="1"/>
</dbReference>
<dbReference type="Gene3D" id="3.40.50.620">
    <property type="entry name" value="HUPs"/>
    <property type="match status" value="1"/>
</dbReference>
<dbReference type="HAMAP" id="MF_00041">
    <property type="entry name" value="Cys_tRNA_synth"/>
    <property type="match status" value="1"/>
</dbReference>
<dbReference type="InterPro" id="IPR015803">
    <property type="entry name" value="Cys-tRNA-ligase"/>
</dbReference>
<dbReference type="InterPro" id="IPR015273">
    <property type="entry name" value="Cys-tRNA-synt_Ia_DALR"/>
</dbReference>
<dbReference type="InterPro" id="IPR024909">
    <property type="entry name" value="Cys-tRNA/MSH_ligase"/>
</dbReference>
<dbReference type="InterPro" id="IPR056411">
    <property type="entry name" value="CysS_C"/>
</dbReference>
<dbReference type="InterPro" id="IPR014729">
    <property type="entry name" value="Rossmann-like_a/b/a_fold"/>
</dbReference>
<dbReference type="InterPro" id="IPR032678">
    <property type="entry name" value="tRNA-synt_1_cat_dom"/>
</dbReference>
<dbReference type="InterPro" id="IPR009080">
    <property type="entry name" value="tRNAsynth_Ia_anticodon-bd"/>
</dbReference>
<dbReference type="NCBIfam" id="TIGR00435">
    <property type="entry name" value="cysS"/>
    <property type="match status" value="1"/>
</dbReference>
<dbReference type="PANTHER" id="PTHR10890:SF30">
    <property type="entry name" value="CYSTEINE--TRNA LIGASE"/>
    <property type="match status" value="1"/>
</dbReference>
<dbReference type="PANTHER" id="PTHR10890">
    <property type="entry name" value="CYSTEINYL-TRNA SYNTHETASE"/>
    <property type="match status" value="1"/>
</dbReference>
<dbReference type="Pfam" id="PF23493">
    <property type="entry name" value="CysS_C"/>
    <property type="match status" value="1"/>
</dbReference>
<dbReference type="Pfam" id="PF09190">
    <property type="entry name" value="DALR_2"/>
    <property type="match status" value="1"/>
</dbReference>
<dbReference type="Pfam" id="PF01406">
    <property type="entry name" value="tRNA-synt_1e"/>
    <property type="match status" value="1"/>
</dbReference>
<dbReference type="PRINTS" id="PR00983">
    <property type="entry name" value="TRNASYNTHCYS"/>
</dbReference>
<dbReference type="SMART" id="SM00840">
    <property type="entry name" value="DALR_2"/>
    <property type="match status" value="1"/>
</dbReference>
<dbReference type="SUPFAM" id="SSF47323">
    <property type="entry name" value="Anticodon-binding domain of a subclass of class I aminoacyl-tRNA synthetases"/>
    <property type="match status" value="1"/>
</dbReference>
<dbReference type="SUPFAM" id="SSF52374">
    <property type="entry name" value="Nucleotidylyl transferase"/>
    <property type="match status" value="1"/>
</dbReference>
<organism>
    <name type="scientific">Corynebacterium diphtheriae (strain ATCC 700971 / NCTC 13129 / Biotype gravis)</name>
    <dbReference type="NCBI Taxonomy" id="257309"/>
    <lineage>
        <taxon>Bacteria</taxon>
        <taxon>Bacillati</taxon>
        <taxon>Actinomycetota</taxon>
        <taxon>Actinomycetes</taxon>
        <taxon>Mycobacteriales</taxon>
        <taxon>Corynebacteriaceae</taxon>
        <taxon>Corynebacterium</taxon>
    </lineage>
</organism>
<proteinExistence type="inferred from homology"/>
<sequence length="463" mass="51195">MTLRIFDTGTRSLRDFEPIRPGHASIYLCGATPQTQPHIGHVRSGVAFDILRRWLIAQGLDVAFVRNVTDIDDKILTKAAENGRPWWEWVSTYEREFTWAYNQLGVLPPSVEPRATGHVTQMVEYMQRLIDNGFAYAAEGSVYFDVAAWTAAEGSDYGSLSGNRVEEMEQGETEITGKRGAHDFALWKAAKPGEPSWPTPWGDGRPGWHLECSAMATWYLGGEFDIHCGGLDLQFPHHENEIAQSHAAGDGFANYWMHNHWVTMSGEKMSKSLGNVLSVPNILDKVRPVELRYYLGSAHYRSMLEYSEGALLEAAAGYRRIEAFLTKVADVEAGQWTTEFEEAMNDDLAVPRALAEIHTQVRHGNSALAAGDVDKAHEIAASVRAMAAVLGVDPLDEKWLDSAASDSSTNAALDVLVQAELQRRTEARAAKDWATADEVRDRLHAAGITVTDTPDGPTWALNN</sequence>